<protein>
    <recommendedName>
        <fullName evidence="1">3-methyl-2-oxobutanoate hydroxymethyltransferase</fullName>
        <ecNumber evidence="1">2.1.2.11</ecNumber>
    </recommendedName>
    <alternativeName>
        <fullName evidence="1">Ketopantoate hydroxymethyltransferase</fullName>
        <shortName evidence="1">KPHMT</shortName>
    </alternativeName>
</protein>
<proteinExistence type="inferred from homology"/>
<organism>
    <name type="scientific">Koribacter versatilis (strain Ellin345)</name>
    <dbReference type="NCBI Taxonomy" id="204669"/>
    <lineage>
        <taxon>Bacteria</taxon>
        <taxon>Pseudomonadati</taxon>
        <taxon>Acidobacteriota</taxon>
        <taxon>Terriglobia</taxon>
        <taxon>Terriglobales</taxon>
        <taxon>Candidatus Korobacteraceae</taxon>
        <taxon>Candidatus Korobacter</taxon>
    </lineage>
</organism>
<reference key="1">
    <citation type="journal article" date="2009" name="Appl. Environ. Microbiol.">
        <title>Three genomes from the phylum Acidobacteria provide insight into the lifestyles of these microorganisms in soils.</title>
        <authorList>
            <person name="Ward N.L."/>
            <person name="Challacombe J.F."/>
            <person name="Janssen P.H."/>
            <person name="Henrissat B."/>
            <person name="Coutinho P.M."/>
            <person name="Wu M."/>
            <person name="Xie G."/>
            <person name="Haft D.H."/>
            <person name="Sait M."/>
            <person name="Badger J."/>
            <person name="Barabote R.D."/>
            <person name="Bradley B."/>
            <person name="Brettin T.S."/>
            <person name="Brinkac L.M."/>
            <person name="Bruce D."/>
            <person name="Creasy T."/>
            <person name="Daugherty S.C."/>
            <person name="Davidsen T.M."/>
            <person name="DeBoy R.T."/>
            <person name="Detter J.C."/>
            <person name="Dodson R.J."/>
            <person name="Durkin A.S."/>
            <person name="Ganapathy A."/>
            <person name="Gwinn-Giglio M."/>
            <person name="Han C.S."/>
            <person name="Khouri H."/>
            <person name="Kiss H."/>
            <person name="Kothari S.P."/>
            <person name="Madupu R."/>
            <person name="Nelson K.E."/>
            <person name="Nelson W.C."/>
            <person name="Paulsen I."/>
            <person name="Penn K."/>
            <person name="Ren Q."/>
            <person name="Rosovitz M.J."/>
            <person name="Selengut J.D."/>
            <person name="Shrivastava S."/>
            <person name="Sullivan S.A."/>
            <person name="Tapia R."/>
            <person name="Thompson L.S."/>
            <person name="Watkins K.L."/>
            <person name="Yang Q."/>
            <person name="Yu C."/>
            <person name="Zafar N."/>
            <person name="Zhou L."/>
            <person name="Kuske C.R."/>
        </authorList>
    </citation>
    <scope>NUCLEOTIDE SEQUENCE [LARGE SCALE GENOMIC DNA]</scope>
    <source>
        <strain>Ellin345</strain>
    </source>
</reference>
<keyword id="KW-0963">Cytoplasm</keyword>
<keyword id="KW-0460">Magnesium</keyword>
<keyword id="KW-0479">Metal-binding</keyword>
<keyword id="KW-0566">Pantothenate biosynthesis</keyword>
<keyword id="KW-1185">Reference proteome</keyword>
<keyword id="KW-0808">Transferase</keyword>
<sequence length="295" mass="32173">MSIATGDFRSKVTSSTLLDKKSKHDPITCLTAYDYSTARLVDEAGIDMILVGDSLAQTMLGYENTLPVTMDEMLHHTRAVRRAVRHAFLIADMPYASYHVGGRESVRNAARFIKEGGAEAVKIEGGENRAALIDRLLDAEVPVVGHIGLTPQSVHRMGGYKVQGKTIRDIEQLMRDATALDRAGVVALVLEGIPREVAAMITAEVETPTIGIGAGPDCDGQVLVFHDILNLTFAPPAKFVRRYADAAELITGAVKAFRDDVKTGSYPSDDESYHLPKEAQATLEMVQNRKHAMRK</sequence>
<dbReference type="EC" id="2.1.2.11" evidence="1"/>
<dbReference type="EMBL" id="CP000360">
    <property type="protein sequence ID" value="ABF43745.1"/>
    <property type="molecule type" value="Genomic_DNA"/>
</dbReference>
<dbReference type="RefSeq" id="WP_011525541.1">
    <property type="nucleotide sequence ID" value="NC_008009.1"/>
</dbReference>
<dbReference type="SMR" id="Q1IHA5"/>
<dbReference type="STRING" id="204669.Acid345_4746"/>
<dbReference type="EnsemblBacteria" id="ABF43745">
    <property type="protein sequence ID" value="ABF43745"/>
    <property type="gene ID" value="Acid345_4746"/>
</dbReference>
<dbReference type="KEGG" id="aba:Acid345_4746"/>
<dbReference type="eggNOG" id="COG0413">
    <property type="taxonomic scope" value="Bacteria"/>
</dbReference>
<dbReference type="HOGENOM" id="CLU_036645_1_0_0"/>
<dbReference type="OrthoDB" id="9781789at2"/>
<dbReference type="UniPathway" id="UPA00028">
    <property type="reaction ID" value="UER00003"/>
</dbReference>
<dbReference type="Proteomes" id="UP000002432">
    <property type="component" value="Chromosome"/>
</dbReference>
<dbReference type="GO" id="GO:0005737">
    <property type="term" value="C:cytoplasm"/>
    <property type="evidence" value="ECO:0007669"/>
    <property type="project" value="UniProtKB-SubCell"/>
</dbReference>
<dbReference type="GO" id="GO:0003864">
    <property type="term" value="F:3-methyl-2-oxobutanoate hydroxymethyltransferase activity"/>
    <property type="evidence" value="ECO:0007669"/>
    <property type="project" value="UniProtKB-UniRule"/>
</dbReference>
<dbReference type="GO" id="GO:0000287">
    <property type="term" value="F:magnesium ion binding"/>
    <property type="evidence" value="ECO:0007669"/>
    <property type="project" value="TreeGrafter"/>
</dbReference>
<dbReference type="GO" id="GO:0015940">
    <property type="term" value="P:pantothenate biosynthetic process"/>
    <property type="evidence" value="ECO:0007669"/>
    <property type="project" value="UniProtKB-UniRule"/>
</dbReference>
<dbReference type="CDD" id="cd06557">
    <property type="entry name" value="KPHMT-like"/>
    <property type="match status" value="1"/>
</dbReference>
<dbReference type="FunFam" id="3.20.20.60:FF:000003">
    <property type="entry name" value="3-methyl-2-oxobutanoate hydroxymethyltransferase"/>
    <property type="match status" value="1"/>
</dbReference>
<dbReference type="Gene3D" id="3.20.20.60">
    <property type="entry name" value="Phosphoenolpyruvate-binding domains"/>
    <property type="match status" value="1"/>
</dbReference>
<dbReference type="HAMAP" id="MF_00156">
    <property type="entry name" value="PanB"/>
    <property type="match status" value="1"/>
</dbReference>
<dbReference type="InterPro" id="IPR003700">
    <property type="entry name" value="Pantoate_hydroxy_MeTrfase"/>
</dbReference>
<dbReference type="InterPro" id="IPR015813">
    <property type="entry name" value="Pyrv/PenolPyrv_kinase-like_dom"/>
</dbReference>
<dbReference type="InterPro" id="IPR040442">
    <property type="entry name" value="Pyrv_kinase-like_dom_sf"/>
</dbReference>
<dbReference type="NCBIfam" id="TIGR00222">
    <property type="entry name" value="panB"/>
    <property type="match status" value="1"/>
</dbReference>
<dbReference type="NCBIfam" id="NF001452">
    <property type="entry name" value="PRK00311.1"/>
    <property type="match status" value="1"/>
</dbReference>
<dbReference type="PANTHER" id="PTHR20881">
    <property type="entry name" value="3-METHYL-2-OXOBUTANOATE HYDROXYMETHYLTRANSFERASE"/>
    <property type="match status" value="1"/>
</dbReference>
<dbReference type="PANTHER" id="PTHR20881:SF0">
    <property type="entry name" value="3-METHYL-2-OXOBUTANOATE HYDROXYMETHYLTRANSFERASE"/>
    <property type="match status" value="1"/>
</dbReference>
<dbReference type="Pfam" id="PF02548">
    <property type="entry name" value="Pantoate_transf"/>
    <property type="match status" value="1"/>
</dbReference>
<dbReference type="PIRSF" id="PIRSF000388">
    <property type="entry name" value="Pantoate_hydroxy_MeTrfase"/>
    <property type="match status" value="1"/>
</dbReference>
<dbReference type="SUPFAM" id="SSF51621">
    <property type="entry name" value="Phosphoenolpyruvate/pyruvate domain"/>
    <property type="match status" value="1"/>
</dbReference>
<comment type="function">
    <text evidence="1">Catalyzes the reversible reaction in which hydroxymethyl group from 5,10-methylenetetrahydrofolate is transferred onto alpha-ketoisovalerate to form ketopantoate.</text>
</comment>
<comment type="catalytic activity">
    <reaction evidence="1">
        <text>3-methyl-2-oxobutanoate + (6R)-5,10-methylene-5,6,7,8-tetrahydrofolate + H2O = 2-dehydropantoate + (6S)-5,6,7,8-tetrahydrofolate</text>
        <dbReference type="Rhea" id="RHEA:11824"/>
        <dbReference type="ChEBI" id="CHEBI:11561"/>
        <dbReference type="ChEBI" id="CHEBI:11851"/>
        <dbReference type="ChEBI" id="CHEBI:15377"/>
        <dbReference type="ChEBI" id="CHEBI:15636"/>
        <dbReference type="ChEBI" id="CHEBI:57453"/>
        <dbReference type="EC" id="2.1.2.11"/>
    </reaction>
</comment>
<comment type="cofactor">
    <cofactor evidence="1">
        <name>Mg(2+)</name>
        <dbReference type="ChEBI" id="CHEBI:18420"/>
    </cofactor>
    <text evidence="1">Binds 1 Mg(2+) ion per subunit.</text>
</comment>
<comment type="pathway">
    <text evidence="1">Cofactor biosynthesis; (R)-pantothenate biosynthesis; (R)-pantoate from 3-methyl-2-oxobutanoate: step 1/2.</text>
</comment>
<comment type="subunit">
    <text evidence="1">Homodecamer; pentamer of dimers.</text>
</comment>
<comment type="subcellular location">
    <subcellularLocation>
        <location evidence="1">Cytoplasm</location>
    </subcellularLocation>
</comment>
<comment type="similarity">
    <text evidence="1">Belongs to the PanB family.</text>
</comment>
<gene>
    <name evidence="1" type="primary">panB</name>
    <name type="ordered locus">Acid345_4746</name>
</gene>
<accession>Q1IHA5</accession>
<name>PANB_KORVE</name>
<evidence type="ECO:0000255" key="1">
    <source>
        <dbReference type="HAMAP-Rule" id="MF_00156"/>
    </source>
</evidence>
<feature type="chain" id="PRO_0000297204" description="3-methyl-2-oxobutanoate hydroxymethyltransferase">
    <location>
        <begin position="1"/>
        <end position="295"/>
    </location>
</feature>
<feature type="active site" description="Proton acceptor" evidence="1">
    <location>
        <position position="191"/>
    </location>
</feature>
<feature type="binding site" evidence="1">
    <location>
        <begin position="53"/>
        <end position="54"/>
    </location>
    <ligand>
        <name>3-methyl-2-oxobutanoate</name>
        <dbReference type="ChEBI" id="CHEBI:11851"/>
    </ligand>
</feature>
<feature type="binding site" evidence="1">
    <location>
        <position position="53"/>
    </location>
    <ligand>
        <name>Mg(2+)</name>
        <dbReference type="ChEBI" id="CHEBI:18420"/>
    </ligand>
</feature>
<feature type="binding site" evidence="1">
    <location>
        <position position="92"/>
    </location>
    <ligand>
        <name>3-methyl-2-oxobutanoate</name>
        <dbReference type="ChEBI" id="CHEBI:11851"/>
    </ligand>
</feature>
<feature type="binding site" evidence="1">
    <location>
        <position position="92"/>
    </location>
    <ligand>
        <name>Mg(2+)</name>
        <dbReference type="ChEBI" id="CHEBI:18420"/>
    </ligand>
</feature>
<feature type="binding site" evidence="1">
    <location>
        <position position="122"/>
    </location>
    <ligand>
        <name>3-methyl-2-oxobutanoate</name>
        <dbReference type="ChEBI" id="CHEBI:11851"/>
    </ligand>
</feature>
<feature type="binding site" evidence="1">
    <location>
        <position position="124"/>
    </location>
    <ligand>
        <name>Mg(2+)</name>
        <dbReference type="ChEBI" id="CHEBI:18420"/>
    </ligand>
</feature>